<comment type="function">
    <text evidence="3 4">Mitochondrial membrane ATP synthase (F(1)F(0) ATP synthase or Complex V) produces ATP from ADP in the presence of a proton gradient across the membrane which is generated by electron transport complexes of the respiratory chain (PubMed:25759169). F-type ATP synthases consist of two structural domains, F(1) - containing the extramembraneous catalytic core, and F(0) - containing the membrane proton channel, linked together by a central stalk and a peripheral stalk (PubMed:27373333). During catalysis, ATP synthesis in the catalytic domain of F(1) is coupled via a rotary mechanism of the central stalk subunits to proton translocation (PubMed:27373333). Part of the complex F(0) domain (PubMed:27373333). Minor subunit located with subunit a/ATP6 in the membrane (PubMed:27373333).</text>
</comment>
<comment type="subunit">
    <text evidence="3 4">F-type ATP synthases have 2 components, the catalytic core F(1) and the membrane-embedded component F(0), linked together by a central stalk and a peripheral stalk (PubMed:27373333). The central stalk, also called rotor shaft, is often seen as part of F(1) (PubMed:27373333). The peripheral stalk is seen as part of F(0) (PubMed:27373333). F(0) contains the membrane channel next to the rotor (PubMed:27373333). F-type ATP synthases form dimers but each monomer functions independently in ATP generation (PubMed:27373333). The dimer consists of 17 different polypeptides: ATP1 (subunit alpha, 3 molecules per monomer, part of F(1)), ATP2 (subunit beta, 3 copies per monomer, part of F(1)), ATP3 (subunit gamma, part of the central stalk), ATP4 (subunit b, part of the peripheral stalk), ATP5/OSCP (subunit 5/OSCP, part of the peripheral stalk), ATP6 (subunit a, part of the peripheral stalk), ATP7 (subunit d, part of the peripheral stalk), ATP8 (subunit 8, part of the peripheral stalk), OLI1 (subunit c, part of the rotor, 10 molecules per monomer), ATP14 (subunit h, part of the peripheral stalk), ATP15 (subunit epsilon, part of the central stalk), ATP16 (subunit delta, part of the central stalk), ATP17 (subunit f, part of the peripheral stalk), ATP18 (subunit i/j, part of the peripheral stalk), ATP19 (subunit k, dimer-specific, at interface between monomers), ATP20 (subunit g, at interface between monomers), TIM11 (subunit e, at interface between monomers) (PubMed:25759169, PubMed:27373333).</text>
</comment>
<comment type="subcellular location">
    <subcellularLocation>
        <location evidence="8">Mitochondrion inner membrane</location>
        <topology evidence="2">Single-pass membrane protein</topology>
    </subcellularLocation>
    <text evidence="8">The F-type ATP synthase complex is anchored in the mitochondrial inner membrane via the F(0) domain with the F(1) domain and the peripheral stalk extending into the mitochondrial matrix.</text>
</comment>
<comment type="mass spectrometry" mass="5799.9" method="MALDI" evidence="3"/>
<comment type="similarity">
    <text evidence="7">Belongs to the ATPase protein 8 family.</text>
</comment>
<dbReference type="EMBL" id="L15359">
    <property type="protein sequence ID" value="AAA78260.1"/>
    <property type="status" value="ALT_SEQ"/>
    <property type="molecule type" value="Genomic_DNA"/>
</dbReference>
<dbReference type="EMBL" id="AJ307410">
    <property type="protein sequence ID" value="CAC28099.2"/>
    <property type="molecule type" value="Genomic_DNA"/>
</dbReference>
<dbReference type="PIR" id="S51501">
    <property type="entry name" value="S51501"/>
</dbReference>
<dbReference type="RefSeq" id="NP_075432.2">
    <property type="nucleotide sequence ID" value="NC_002659.1"/>
</dbReference>
<dbReference type="SMR" id="Q36257"/>
<dbReference type="FunCoup" id="Q36257">
    <property type="interactions" value="90"/>
</dbReference>
<dbReference type="STRING" id="284591.Q36257"/>
<dbReference type="GeneID" id="802621"/>
<dbReference type="KEGG" id="yli:802621"/>
<dbReference type="InParanoid" id="Q36257"/>
<dbReference type="Proteomes" id="UP000001300">
    <property type="component" value="Mitochondrion"/>
</dbReference>
<dbReference type="GO" id="GO:0005743">
    <property type="term" value="C:mitochondrial inner membrane"/>
    <property type="evidence" value="ECO:0007669"/>
    <property type="project" value="UniProtKB-SubCell"/>
</dbReference>
<dbReference type="GO" id="GO:0045259">
    <property type="term" value="C:proton-transporting ATP synthase complex"/>
    <property type="evidence" value="ECO:0007669"/>
    <property type="project" value="UniProtKB-KW"/>
</dbReference>
<dbReference type="GO" id="GO:0015078">
    <property type="term" value="F:proton transmembrane transporter activity"/>
    <property type="evidence" value="ECO:0007669"/>
    <property type="project" value="InterPro"/>
</dbReference>
<dbReference type="GO" id="GO:0015986">
    <property type="term" value="P:proton motive force-driven ATP synthesis"/>
    <property type="evidence" value="ECO:0000318"/>
    <property type="project" value="GO_Central"/>
</dbReference>
<dbReference type="InterPro" id="IPR009230">
    <property type="entry name" value="ATP_synth_su8_fun"/>
</dbReference>
<dbReference type="PANTHER" id="PTHR36101">
    <property type="entry name" value="ATP SYNTHASE PROTEIN 8"/>
    <property type="match status" value="1"/>
</dbReference>
<dbReference type="PANTHER" id="PTHR36101:SF1">
    <property type="entry name" value="ATP SYNTHASE PROTEIN 8"/>
    <property type="match status" value="1"/>
</dbReference>
<dbReference type="Pfam" id="PF05933">
    <property type="entry name" value="Fun_ATP-synt_8"/>
    <property type="match status" value="1"/>
</dbReference>
<organism>
    <name type="scientific">Yarrowia lipolytica (strain CLIB 122 / E 150)</name>
    <name type="common">Yeast</name>
    <name type="synonym">Candida lipolytica</name>
    <dbReference type="NCBI Taxonomy" id="284591"/>
    <lineage>
        <taxon>Eukaryota</taxon>
        <taxon>Fungi</taxon>
        <taxon>Dikarya</taxon>
        <taxon>Ascomycota</taxon>
        <taxon>Saccharomycotina</taxon>
        <taxon>Dipodascomycetes</taxon>
        <taxon>Dipodascales</taxon>
        <taxon>Dipodascales incertae sedis</taxon>
        <taxon>Yarrowia</taxon>
    </lineage>
</organism>
<protein>
    <recommendedName>
        <fullName evidence="6">ATP synthase protein 8</fullName>
    </recommendedName>
    <alternativeName>
        <fullName evidence="1">A6L</fullName>
    </alternativeName>
    <alternativeName>
        <fullName evidence="1">F-ATPase subunit 8</fullName>
    </alternativeName>
</protein>
<keyword id="KW-0066">ATP synthesis</keyword>
<keyword id="KW-0138">CF(0)</keyword>
<keyword id="KW-0291">Formylation</keyword>
<keyword id="KW-0375">Hydrogen ion transport</keyword>
<keyword id="KW-0406">Ion transport</keyword>
<keyword id="KW-0472">Membrane</keyword>
<keyword id="KW-0496">Mitochondrion</keyword>
<keyword id="KW-0999">Mitochondrion inner membrane</keyword>
<keyword id="KW-1185">Reference proteome</keyword>
<keyword id="KW-0812">Transmembrane</keyword>
<keyword id="KW-1133">Transmembrane helix</keyword>
<keyword id="KW-0813">Transport</keyword>
<reference key="1">
    <citation type="journal article" date="1994" name="Curr. Genet.">
        <title>Organization and transcription of the mitochondrial ATP synthase genes in the yeast Yarrowia lipolytica.</title>
        <authorList>
            <person name="Matsuoka M."/>
            <person name="Matsubara M."/>
            <person name="Inoue J."/>
            <person name="Kakehi M."/>
            <person name="Imanaka T."/>
        </authorList>
    </citation>
    <scope>NUCLEOTIDE SEQUENCE [GENOMIC DNA]</scope>
    <source>
        <strain>ATCC 44601 / 281</strain>
    </source>
</reference>
<reference key="2">
    <citation type="journal article" date="2001" name="Comp. Funct. Genomics">
        <title>The complete mitochondrial genome of Yarrowia lipolytica.</title>
        <authorList>
            <person name="Kerscher S."/>
            <person name="Durstewitz G."/>
            <person name="Casaregola S."/>
            <person name="Gaillardin C."/>
            <person name="Brandt U."/>
        </authorList>
    </citation>
    <scope>NUCLEOTIDE SEQUENCE [LARGE SCALE GENOMIC DNA]</scope>
    <source>
        <strain>ATCC 20460 / W29 / CBS 7504 / IFP29</strain>
    </source>
</reference>
<reference key="3">
    <citation type="journal article" date="2015" name="Biochem. J.">
        <title>The purification and characterization of ATP synthase complexes from the mitochondria of four fungal species.</title>
        <authorList>
            <person name="Liu S."/>
            <person name="Charlesworth T.J."/>
            <person name="Bason J.V."/>
            <person name="Montgomery M.G."/>
            <person name="Harbour M.E."/>
            <person name="Fearnley I.M."/>
            <person name="Walker J.E."/>
        </authorList>
    </citation>
    <scope>IDENTIFICATION IN ATP SYNTHASE COMPLEX</scope>
    <scope>FUNCTION OF ATP SYNTHASE COMPLEX</scope>
    <scope>SUBUNIT</scope>
    <scope>MASS SPECTROMETRY</scope>
    <scope>IDENTIFICATION BY MASS SPECTROMETRY</scope>
    <scope>FORMYLATION AT MET-1</scope>
    <source>
        <strain evidence="6">CLIB 122 / E 150</strain>
    </source>
</reference>
<reference key="4">
    <citation type="journal article" date="2016" name="Mol. Cell">
        <title>Structure of a Complete ATP Synthase Dimer Reveals the Molecular Basis of Inner Mitochondrial Membrane Morphology.</title>
        <authorList>
            <person name="Hahn A."/>
            <person name="Parey K."/>
            <person name="Bublitz M."/>
            <person name="Mills D.J."/>
            <person name="Zickermann V."/>
            <person name="Vonck J."/>
            <person name="Kuehlbrandt W."/>
            <person name="Meier T."/>
        </authorList>
    </citation>
    <scope>STRUCTURE BY ELECTRON MICROSCOPY (7.7 ANGSTROMS) OF DIMERIC ATP SYNTHASE COMPLEX</scope>
    <scope>FUNCTION</scope>
    <scope>SUBUNIT</scope>
    <scope>SUBCELLULAR LOCATION</scope>
    <scope>MEMBRANE TOPOLOGY</scope>
</reference>
<gene>
    <name evidence="1" type="primary">ATP8</name>
</gene>
<accession>Q36257</accession>
<accession>Q9B6E0</accession>
<evidence type="ECO:0000250" key="1">
    <source>
        <dbReference type="UniProtKB" id="P00856"/>
    </source>
</evidence>
<evidence type="ECO:0000255" key="2"/>
<evidence type="ECO:0000269" key="3">
    <source>
    </source>
</evidence>
<evidence type="ECO:0000269" key="4">
    <source>
    </source>
</evidence>
<evidence type="ECO:0000269" key="5">
    <source>
    </source>
</evidence>
<evidence type="ECO:0000303" key="6">
    <source>
    </source>
</evidence>
<evidence type="ECO:0000305" key="7"/>
<evidence type="ECO:0000305" key="8">
    <source>
    </source>
</evidence>
<feature type="chain" id="PRO_0000195606" description="ATP synthase protein 8">
    <location>
        <begin position="1"/>
        <end position="48"/>
    </location>
</feature>
<feature type="topological domain" description="Mitochondrial intermembrane" evidence="8">
    <location>
        <begin position="1"/>
        <end position="12"/>
    </location>
</feature>
<feature type="transmembrane region" description="Helical" evidence="2">
    <location>
        <begin position="13"/>
        <end position="32"/>
    </location>
</feature>
<feature type="topological domain" description="Mitochondrial matrix" evidence="8">
    <location>
        <begin position="33"/>
        <end position="48"/>
    </location>
</feature>
<feature type="modified residue" description="N-formylmethionine" evidence="5">
    <location>
        <position position="1"/>
    </location>
</feature>
<name>ATP8_YARLI</name>
<geneLocation type="mitochondrion"/>
<proteinExistence type="evidence at protein level"/>
<sequence length="48" mass="5772">MPQLVPFYFTNQIFYGFASLSVIVYLFSIYILPHYLEIYVTRIFITKT</sequence>